<dbReference type="EMBL" id="AE014613">
    <property type="protein sequence ID" value="AAO71826.1"/>
    <property type="molecule type" value="Genomic_DNA"/>
</dbReference>
<dbReference type="EMBL" id="AL513382">
    <property type="protein sequence ID" value="CAD06803.1"/>
    <property type="molecule type" value="Genomic_DNA"/>
</dbReference>
<dbReference type="RefSeq" id="NP_458762.1">
    <property type="nucleotide sequence ID" value="NC_003198.1"/>
</dbReference>
<dbReference type="RefSeq" id="WP_000887832.1">
    <property type="nucleotide sequence ID" value="NZ_WSUR01000012.1"/>
</dbReference>
<dbReference type="SMR" id="Q8XGE0"/>
<dbReference type="STRING" id="220341.gene:17588501"/>
<dbReference type="GeneID" id="66758552"/>
<dbReference type="KEGG" id="stt:t4375"/>
<dbReference type="KEGG" id="sty:STY4683"/>
<dbReference type="PATRIC" id="fig|220341.7.peg.4783"/>
<dbReference type="eggNOG" id="COG1324">
    <property type="taxonomic scope" value="Bacteria"/>
</dbReference>
<dbReference type="HOGENOM" id="CLU_098807_3_0_6"/>
<dbReference type="OMA" id="VYTTFPD"/>
<dbReference type="OrthoDB" id="37622at2"/>
<dbReference type="Proteomes" id="UP000000541">
    <property type="component" value="Chromosome"/>
</dbReference>
<dbReference type="Proteomes" id="UP000002670">
    <property type="component" value="Chromosome"/>
</dbReference>
<dbReference type="GO" id="GO:0005737">
    <property type="term" value="C:cytoplasm"/>
    <property type="evidence" value="ECO:0007669"/>
    <property type="project" value="UniProtKB-SubCell"/>
</dbReference>
<dbReference type="GO" id="GO:0005507">
    <property type="term" value="F:copper ion binding"/>
    <property type="evidence" value="ECO:0007669"/>
    <property type="project" value="UniProtKB-UniRule"/>
</dbReference>
<dbReference type="GO" id="GO:0010038">
    <property type="term" value="P:response to metal ion"/>
    <property type="evidence" value="ECO:0007669"/>
    <property type="project" value="InterPro"/>
</dbReference>
<dbReference type="FunFam" id="3.30.70.120:FF:000004">
    <property type="entry name" value="Divalent-cation tolerance protein CutA"/>
    <property type="match status" value="1"/>
</dbReference>
<dbReference type="Gene3D" id="3.30.70.120">
    <property type="match status" value="1"/>
</dbReference>
<dbReference type="HAMAP" id="MF_01160">
    <property type="entry name" value="CutA"/>
    <property type="match status" value="1"/>
</dbReference>
<dbReference type="InterPro" id="IPR023700">
    <property type="entry name" value="CutA_Enterobact"/>
</dbReference>
<dbReference type="InterPro" id="IPR004323">
    <property type="entry name" value="Ion_tolerance_CutA"/>
</dbReference>
<dbReference type="InterPro" id="IPR011322">
    <property type="entry name" value="N-reg_PII-like_a/b"/>
</dbReference>
<dbReference type="InterPro" id="IPR015867">
    <property type="entry name" value="N-reg_PII/ATP_PRibTrfase_C"/>
</dbReference>
<dbReference type="NCBIfam" id="NF007930">
    <property type="entry name" value="PRK10645.1"/>
    <property type="match status" value="1"/>
</dbReference>
<dbReference type="PANTHER" id="PTHR23419">
    <property type="entry name" value="DIVALENT CATION TOLERANCE CUTA-RELATED"/>
    <property type="match status" value="1"/>
</dbReference>
<dbReference type="PANTHER" id="PTHR23419:SF8">
    <property type="entry name" value="FI09726P"/>
    <property type="match status" value="1"/>
</dbReference>
<dbReference type="Pfam" id="PF03091">
    <property type="entry name" value="CutA1"/>
    <property type="match status" value="1"/>
</dbReference>
<dbReference type="SUPFAM" id="SSF54913">
    <property type="entry name" value="GlnB-like"/>
    <property type="match status" value="1"/>
</dbReference>
<proteinExistence type="inferred from homology"/>
<comment type="function">
    <text evidence="1">Involved in resistance toward heavy metals.</text>
</comment>
<comment type="cofactor">
    <cofactor evidence="1">
        <name>Cu cation</name>
        <dbReference type="ChEBI" id="CHEBI:23378"/>
    </cofactor>
    <text evidence="1">Binds 1 copper ion per subunit.</text>
</comment>
<comment type="subunit">
    <text evidence="1">Homotrimer.</text>
</comment>
<comment type="subcellular location">
    <subcellularLocation>
        <location evidence="1">Cytoplasm</location>
    </subcellularLocation>
</comment>
<comment type="similarity">
    <text evidence="1">Belongs to the CutA family.</text>
</comment>
<name>CUTA_SALTI</name>
<evidence type="ECO:0000255" key="1">
    <source>
        <dbReference type="HAMAP-Rule" id="MF_01160"/>
    </source>
</evidence>
<protein>
    <recommendedName>
        <fullName evidence="1">Divalent-cation tolerance protein CutA</fullName>
    </recommendedName>
</protein>
<feature type="chain" id="PRO_0000157123" description="Divalent-cation tolerance protein CutA">
    <location>
        <begin position="1"/>
        <end position="115"/>
    </location>
</feature>
<feature type="binding site" evidence="1">
    <location>
        <position position="19"/>
    </location>
    <ligand>
        <name>Cu cation</name>
        <dbReference type="ChEBI" id="CHEBI:23378"/>
    </ligand>
</feature>
<feature type="binding site" evidence="1">
    <location>
        <position position="86"/>
    </location>
    <ligand>
        <name>Cu cation</name>
        <dbReference type="ChEBI" id="CHEBI:23378"/>
    </ligand>
</feature>
<feature type="binding site" evidence="1">
    <location>
        <position position="87"/>
    </location>
    <ligand>
        <name>Cu cation</name>
        <dbReference type="ChEBI" id="CHEBI:23378"/>
    </ligand>
</feature>
<gene>
    <name evidence="1" type="primary">cutA</name>
    <name type="ordered locus">STY4683</name>
    <name type="ordered locus">t4375</name>
</gene>
<organism>
    <name type="scientific">Salmonella typhi</name>
    <dbReference type="NCBI Taxonomy" id="90370"/>
    <lineage>
        <taxon>Bacteria</taxon>
        <taxon>Pseudomonadati</taxon>
        <taxon>Pseudomonadota</taxon>
        <taxon>Gammaproteobacteria</taxon>
        <taxon>Enterobacterales</taxon>
        <taxon>Enterobacteriaceae</taxon>
        <taxon>Salmonella</taxon>
    </lineage>
</organism>
<keyword id="KW-0186">Copper</keyword>
<keyword id="KW-0963">Cytoplasm</keyword>
<keyword id="KW-0479">Metal-binding</keyword>
<sequence>MLDVKSQDISIPEAVVVLCTAPDEATAQDLAAKVLAEKLAACATLLPGATSLYYWEGKLEQEYEVQMILKTTVSHQQALIDCLKSHHPYQTPELLVLPVTHGDTDYLSWLNASLR</sequence>
<reference key="1">
    <citation type="journal article" date="2001" name="Nature">
        <title>Complete genome sequence of a multiple drug resistant Salmonella enterica serovar Typhi CT18.</title>
        <authorList>
            <person name="Parkhill J."/>
            <person name="Dougan G."/>
            <person name="James K.D."/>
            <person name="Thomson N.R."/>
            <person name="Pickard D."/>
            <person name="Wain J."/>
            <person name="Churcher C.M."/>
            <person name="Mungall K.L."/>
            <person name="Bentley S.D."/>
            <person name="Holden M.T.G."/>
            <person name="Sebaihia M."/>
            <person name="Baker S."/>
            <person name="Basham D."/>
            <person name="Brooks K."/>
            <person name="Chillingworth T."/>
            <person name="Connerton P."/>
            <person name="Cronin A."/>
            <person name="Davis P."/>
            <person name="Davies R.M."/>
            <person name="Dowd L."/>
            <person name="White N."/>
            <person name="Farrar J."/>
            <person name="Feltwell T."/>
            <person name="Hamlin N."/>
            <person name="Haque A."/>
            <person name="Hien T.T."/>
            <person name="Holroyd S."/>
            <person name="Jagels K."/>
            <person name="Krogh A."/>
            <person name="Larsen T.S."/>
            <person name="Leather S."/>
            <person name="Moule S."/>
            <person name="O'Gaora P."/>
            <person name="Parry C."/>
            <person name="Quail M.A."/>
            <person name="Rutherford K.M."/>
            <person name="Simmonds M."/>
            <person name="Skelton J."/>
            <person name="Stevens K."/>
            <person name="Whitehead S."/>
            <person name="Barrell B.G."/>
        </authorList>
    </citation>
    <scope>NUCLEOTIDE SEQUENCE [LARGE SCALE GENOMIC DNA]</scope>
    <source>
        <strain>CT18</strain>
    </source>
</reference>
<reference key="2">
    <citation type="journal article" date="2003" name="J. Bacteriol.">
        <title>Comparative genomics of Salmonella enterica serovar Typhi strains Ty2 and CT18.</title>
        <authorList>
            <person name="Deng W."/>
            <person name="Liou S.-R."/>
            <person name="Plunkett G. III"/>
            <person name="Mayhew G.F."/>
            <person name="Rose D.J."/>
            <person name="Burland V."/>
            <person name="Kodoyianni V."/>
            <person name="Schwartz D.C."/>
            <person name="Blattner F.R."/>
        </authorList>
    </citation>
    <scope>NUCLEOTIDE SEQUENCE [LARGE SCALE GENOMIC DNA]</scope>
    <source>
        <strain>ATCC 700931 / Ty2</strain>
    </source>
</reference>
<accession>Q8XGE0</accession>
<accession>Q7ALQ9</accession>